<comment type="function">
    <text evidence="1">Involved in the biosynthesis of ADP-glucose, a building block required for the elongation reactions to produce glycogen. Catalyzes the reaction between ATP and alpha-D-glucose 1-phosphate (G1P) to produce pyrophosphate and ADP-Glc.</text>
</comment>
<comment type="catalytic activity">
    <reaction evidence="1">
        <text>alpha-D-glucose 1-phosphate + ATP + H(+) = ADP-alpha-D-glucose + diphosphate</text>
        <dbReference type="Rhea" id="RHEA:12120"/>
        <dbReference type="ChEBI" id="CHEBI:15378"/>
        <dbReference type="ChEBI" id="CHEBI:30616"/>
        <dbReference type="ChEBI" id="CHEBI:33019"/>
        <dbReference type="ChEBI" id="CHEBI:57498"/>
        <dbReference type="ChEBI" id="CHEBI:58601"/>
        <dbReference type="EC" id="2.7.7.27"/>
    </reaction>
</comment>
<comment type="pathway">
    <text evidence="1">Glycan biosynthesis; glycogen biosynthesis.</text>
</comment>
<comment type="subunit">
    <text evidence="1">Homotetramer.</text>
</comment>
<comment type="similarity">
    <text evidence="1">Belongs to the bacterial/plant glucose-1-phosphate adenylyltransferase family.</text>
</comment>
<evidence type="ECO:0000255" key="1">
    <source>
        <dbReference type="HAMAP-Rule" id="MF_00624"/>
    </source>
</evidence>
<evidence type="ECO:0000305" key="2"/>
<feature type="chain" id="PRO_0000195338" description="Glucose-1-phosphate adenylyltransferase">
    <location>
        <begin position="1"/>
        <end position="439"/>
    </location>
</feature>
<feature type="binding site" evidence="1">
    <location>
        <position position="172"/>
    </location>
    <ligand>
        <name>alpha-D-glucose 1-phosphate</name>
        <dbReference type="ChEBI" id="CHEBI:58601"/>
    </ligand>
</feature>
<feature type="binding site" evidence="1">
    <location>
        <begin position="187"/>
        <end position="188"/>
    </location>
    <ligand>
        <name>alpha-D-glucose 1-phosphate</name>
        <dbReference type="ChEBI" id="CHEBI:58601"/>
    </ligand>
</feature>
<feature type="binding site" evidence="1">
    <location>
        <position position="219"/>
    </location>
    <ligand>
        <name>alpha-D-glucose 1-phosphate</name>
        <dbReference type="ChEBI" id="CHEBI:58601"/>
    </ligand>
</feature>
<feature type="sequence conflict" description="In Ref. 2; AAA27275." evidence="2" ref="2">
    <original>A</original>
    <variation>G</variation>
    <location>
        <position position="196"/>
    </location>
</feature>
<keyword id="KW-0067">ATP-binding</keyword>
<keyword id="KW-0119">Carbohydrate metabolism</keyword>
<keyword id="KW-0320">Glycogen biosynthesis</keyword>
<keyword id="KW-0321">Glycogen metabolism</keyword>
<keyword id="KW-0547">Nucleotide-binding</keyword>
<keyword id="KW-0548">Nucleotidyltransferase</keyword>
<keyword id="KW-1185">Reference proteome</keyword>
<keyword id="KW-0808">Transferase</keyword>
<name>GLGC_SYNY3</name>
<dbReference type="EC" id="2.7.7.27" evidence="1"/>
<dbReference type="EMBL" id="BA000022">
    <property type="protein sequence ID" value="BAA18822.1"/>
    <property type="molecule type" value="Genomic_DNA"/>
</dbReference>
<dbReference type="EMBL" id="M83556">
    <property type="protein sequence ID" value="AAA27275.1"/>
    <property type="molecule type" value="Genomic_DNA"/>
</dbReference>
<dbReference type="PIR" id="S76910">
    <property type="entry name" value="S76910"/>
</dbReference>
<dbReference type="SMR" id="P52415"/>
<dbReference type="FunCoup" id="P52415">
    <property type="interactions" value="157"/>
</dbReference>
<dbReference type="IntAct" id="P52415">
    <property type="interactions" value="2"/>
</dbReference>
<dbReference type="STRING" id="1148.gene:10500594"/>
<dbReference type="PaxDb" id="1148-1653912"/>
<dbReference type="EnsemblBacteria" id="BAA18822">
    <property type="protein sequence ID" value="BAA18822"/>
    <property type="gene ID" value="BAA18822"/>
</dbReference>
<dbReference type="KEGG" id="syn:slr1176"/>
<dbReference type="eggNOG" id="COG0448">
    <property type="taxonomic scope" value="Bacteria"/>
</dbReference>
<dbReference type="InParanoid" id="P52415"/>
<dbReference type="PhylomeDB" id="P52415"/>
<dbReference type="BioCyc" id="MetaCyc:MONOMER-20262"/>
<dbReference type="BRENDA" id="2.7.7.27">
    <property type="organism ID" value="382"/>
</dbReference>
<dbReference type="UniPathway" id="UPA00164"/>
<dbReference type="Proteomes" id="UP000001425">
    <property type="component" value="Chromosome"/>
</dbReference>
<dbReference type="GO" id="GO:0031470">
    <property type="term" value="C:carboxysome"/>
    <property type="evidence" value="ECO:0007669"/>
    <property type="project" value="UniProtKB-ARBA"/>
</dbReference>
<dbReference type="GO" id="GO:0005524">
    <property type="term" value="F:ATP binding"/>
    <property type="evidence" value="ECO:0007669"/>
    <property type="project" value="UniProtKB-KW"/>
</dbReference>
<dbReference type="GO" id="GO:0008878">
    <property type="term" value="F:glucose-1-phosphate adenylyltransferase activity"/>
    <property type="evidence" value="ECO:0007669"/>
    <property type="project" value="UniProtKB-UniRule"/>
</dbReference>
<dbReference type="GO" id="GO:0043886">
    <property type="term" value="F:structural constituent of carboxysome shell"/>
    <property type="evidence" value="ECO:0007669"/>
    <property type="project" value="UniProtKB-ARBA"/>
</dbReference>
<dbReference type="GO" id="GO:0005978">
    <property type="term" value="P:glycogen biosynthetic process"/>
    <property type="evidence" value="ECO:0007669"/>
    <property type="project" value="UniProtKB-UniRule"/>
</dbReference>
<dbReference type="CDD" id="cd02508">
    <property type="entry name" value="ADP_Glucose_PP"/>
    <property type="match status" value="1"/>
</dbReference>
<dbReference type="CDD" id="cd04651">
    <property type="entry name" value="LbH_G1P_AT_C"/>
    <property type="match status" value="1"/>
</dbReference>
<dbReference type="Gene3D" id="2.160.10.10">
    <property type="entry name" value="Hexapeptide repeat proteins"/>
    <property type="match status" value="1"/>
</dbReference>
<dbReference type="Gene3D" id="3.90.550.10">
    <property type="entry name" value="Spore Coat Polysaccharide Biosynthesis Protein SpsA, Chain A"/>
    <property type="match status" value="1"/>
</dbReference>
<dbReference type="HAMAP" id="MF_00624">
    <property type="entry name" value="GlgC"/>
    <property type="match status" value="1"/>
</dbReference>
<dbReference type="InterPro" id="IPR011831">
    <property type="entry name" value="ADP-Glc_PPase"/>
</dbReference>
<dbReference type="InterPro" id="IPR005836">
    <property type="entry name" value="ADP_Glu_pyroP_CS"/>
</dbReference>
<dbReference type="InterPro" id="IPR023049">
    <property type="entry name" value="GlgC_bac"/>
</dbReference>
<dbReference type="InterPro" id="IPR005835">
    <property type="entry name" value="NTP_transferase_dom"/>
</dbReference>
<dbReference type="InterPro" id="IPR029044">
    <property type="entry name" value="Nucleotide-diphossugar_trans"/>
</dbReference>
<dbReference type="InterPro" id="IPR011004">
    <property type="entry name" value="Trimer_LpxA-like_sf"/>
</dbReference>
<dbReference type="NCBIfam" id="TIGR02091">
    <property type="entry name" value="glgC"/>
    <property type="match status" value="1"/>
</dbReference>
<dbReference type="NCBIfam" id="NF002772">
    <property type="entry name" value="PRK02862.1"/>
    <property type="match status" value="1"/>
</dbReference>
<dbReference type="PANTHER" id="PTHR43523:SF12">
    <property type="entry name" value="GLUCOSE-1-PHOSPHATE ADENYLYLTRANSFERASE LARGE SUBUNIT 1, CHLOROPLASTIC-RELATED"/>
    <property type="match status" value="1"/>
</dbReference>
<dbReference type="PANTHER" id="PTHR43523">
    <property type="entry name" value="GLUCOSE-1-PHOSPHATE ADENYLYLTRANSFERASE-RELATED"/>
    <property type="match status" value="1"/>
</dbReference>
<dbReference type="Pfam" id="PF25247">
    <property type="entry name" value="LbH_GLGC"/>
    <property type="match status" value="1"/>
</dbReference>
<dbReference type="Pfam" id="PF00483">
    <property type="entry name" value="NTP_transferase"/>
    <property type="match status" value="1"/>
</dbReference>
<dbReference type="SUPFAM" id="SSF53448">
    <property type="entry name" value="Nucleotide-diphospho-sugar transferases"/>
    <property type="match status" value="1"/>
</dbReference>
<dbReference type="SUPFAM" id="SSF51161">
    <property type="entry name" value="Trimeric LpxA-like enzymes"/>
    <property type="match status" value="1"/>
</dbReference>
<dbReference type="PROSITE" id="PS00808">
    <property type="entry name" value="ADP_GLC_PYROPHOSPH_1"/>
    <property type="match status" value="1"/>
</dbReference>
<dbReference type="PROSITE" id="PS00809">
    <property type="entry name" value="ADP_GLC_PYROPHOSPH_2"/>
    <property type="match status" value="1"/>
</dbReference>
<dbReference type="PROSITE" id="PS00810">
    <property type="entry name" value="ADP_GLC_PYROPHOSPH_3"/>
    <property type="match status" value="1"/>
</dbReference>
<reference key="1">
    <citation type="journal article" date="1996" name="DNA Res.">
        <title>Sequence analysis of the genome of the unicellular cyanobacterium Synechocystis sp. strain PCC6803. II. Sequence determination of the entire genome and assignment of potential protein-coding regions.</title>
        <authorList>
            <person name="Kaneko T."/>
            <person name="Sato S."/>
            <person name="Kotani H."/>
            <person name="Tanaka A."/>
            <person name="Asamizu E."/>
            <person name="Nakamura Y."/>
            <person name="Miyajima N."/>
            <person name="Hirosawa M."/>
            <person name="Sugiura M."/>
            <person name="Sasamoto S."/>
            <person name="Kimura T."/>
            <person name="Hosouchi T."/>
            <person name="Matsuno A."/>
            <person name="Muraki A."/>
            <person name="Nakazaki N."/>
            <person name="Naruo K."/>
            <person name="Okumura S."/>
            <person name="Shimpo S."/>
            <person name="Takeuchi C."/>
            <person name="Wada T."/>
            <person name="Watanabe A."/>
            <person name="Yamada M."/>
            <person name="Yasuda M."/>
            <person name="Tabata S."/>
        </authorList>
    </citation>
    <scope>NUCLEOTIDE SEQUENCE [LARGE SCALE GENOMIC DNA]</scope>
    <source>
        <strain>ATCC 27184 / PCC 6803 / Kazusa</strain>
    </source>
</reference>
<reference key="2">
    <citation type="submission" date="1992-02" db="EMBL/GenBank/DDBJ databases">
        <authorList>
            <person name="Kakefuda G."/>
            <person name="Charng Y.Y."/>
            <person name="Iglesias A.A."/>
            <person name="McIntosh L."/>
            <person name="Preiss J."/>
        </authorList>
    </citation>
    <scope>NUCLEOTIDE SEQUENCE [GENOMIC DNA] OF 11-439</scope>
</reference>
<sequence>MCCWQSRGLLVKRVLAIILGGGAGTRLYPLTKLRAKPAVPLAGKYRLIDIPVSNCINSEIVKIYVLTQFNSASLNRHISRAYNFSGFQEGFVEVLAAQQTKDNPDWFQGTADAVRQYLWLFREWDVDEYLILSGDHLYRMDYAQFVKRHRETNADITLSVVPVDDRKAPELGLMKIDAQGRITDFSEKPQGEALRAMQVDTSVLGLSAEKAKLNPYIASMGIYVFKKEVLHNLLEKYEGATDFGKEIIPDSASDHNLQAYLFDDYWEDIGTIEAFYEANLALTKQPSPDFSFYNEKAPIYTRGRYLPPTKMLNSTVTESMIGEGCMIKQCRIHHSVLGIRSRIESDCTIEDTLVMGNDFYESSSERDTLKARGEIAAGIGSGTTIRRAIIDKNARIGKNVMIVNKENVQEANREELGFYIRNGIVVVIKNVTIADGTVI</sequence>
<gene>
    <name evidence="1" type="primary">glgC</name>
    <name type="synonym">agp</name>
    <name type="ordered locus">slr1176</name>
</gene>
<accession>P52415</accession>
<accession>P74703</accession>
<organism>
    <name type="scientific">Synechocystis sp. (strain ATCC 27184 / PCC 6803 / Kazusa)</name>
    <dbReference type="NCBI Taxonomy" id="1111708"/>
    <lineage>
        <taxon>Bacteria</taxon>
        <taxon>Bacillati</taxon>
        <taxon>Cyanobacteriota</taxon>
        <taxon>Cyanophyceae</taxon>
        <taxon>Synechococcales</taxon>
        <taxon>Merismopediaceae</taxon>
        <taxon>Synechocystis</taxon>
    </lineage>
</organism>
<protein>
    <recommendedName>
        <fullName evidence="1">Glucose-1-phosphate adenylyltransferase</fullName>
        <ecNumber evidence="1">2.7.7.27</ecNumber>
    </recommendedName>
    <alternativeName>
        <fullName evidence="1">ADP-glucose pyrophosphorylase</fullName>
        <shortName evidence="1">ADPGlc PPase</shortName>
    </alternativeName>
    <alternativeName>
        <fullName evidence="1">ADP-glucose synthase</fullName>
    </alternativeName>
</protein>
<proteinExistence type="inferred from homology"/>